<organism>
    <name type="scientific">Cronobacter sakazakii (strain ATCC BAA-894)</name>
    <name type="common">Enterobacter sakazakii</name>
    <dbReference type="NCBI Taxonomy" id="290339"/>
    <lineage>
        <taxon>Bacteria</taxon>
        <taxon>Pseudomonadati</taxon>
        <taxon>Pseudomonadota</taxon>
        <taxon>Gammaproteobacteria</taxon>
        <taxon>Enterobacterales</taxon>
        <taxon>Enterobacteriaceae</taxon>
        <taxon>Cronobacter</taxon>
    </lineage>
</organism>
<reference key="1">
    <citation type="journal article" date="2010" name="PLoS ONE">
        <title>Genome sequence of Cronobacter sakazakii BAA-894 and comparative genomic hybridization analysis with other Cronobacter species.</title>
        <authorList>
            <person name="Kucerova E."/>
            <person name="Clifton S.W."/>
            <person name="Xia X.Q."/>
            <person name="Long F."/>
            <person name="Porwollik S."/>
            <person name="Fulton L."/>
            <person name="Fronick C."/>
            <person name="Minx P."/>
            <person name="Kyung K."/>
            <person name="Warren W."/>
            <person name="Fulton R."/>
            <person name="Feng D."/>
            <person name="Wollam A."/>
            <person name="Shah N."/>
            <person name="Bhonagiri V."/>
            <person name="Nash W.E."/>
            <person name="Hallsworth-Pepin K."/>
            <person name="Wilson R.K."/>
            <person name="McClelland M."/>
            <person name="Forsythe S.J."/>
        </authorList>
    </citation>
    <scope>NUCLEOTIDE SEQUENCE [LARGE SCALE GENOMIC DNA]</scope>
    <source>
        <strain>ATCC BAA-894</strain>
    </source>
</reference>
<gene>
    <name type="ordered locus">ESA_02876</name>
</gene>
<evidence type="ECO:0000255" key="1">
    <source>
        <dbReference type="HAMAP-Rule" id="MF_00632"/>
    </source>
</evidence>
<protein>
    <recommendedName>
        <fullName evidence="1">Nucleotide-binding protein ESA_02876</fullName>
    </recommendedName>
</protein>
<name>Y2876_CROS8</name>
<sequence>MPSFDIVSEVDMREVQNAVENATRELETRFDFRNVTASFELNEKNQTIKVTSESDFQVNQLLDILRAKLLKRGIEGSSIEVPEEFDHSGKTWSVEAKLKQGIDSAMAKKIVKLIKDSKLKVQAQIQGEQVRVTGKARDDLQQTIALVRGGNLGQPFQFNNFRD</sequence>
<accession>A7MFH0</accession>
<dbReference type="EMBL" id="CP000783">
    <property type="protein sequence ID" value="ABU78105.1"/>
    <property type="molecule type" value="Genomic_DNA"/>
</dbReference>
<dbReference type="RefSeq" id="WP_004387743.1">
    <property type="nucleotide sequence ID" value="NC_009778.1"/>
</dbReference>
<dbReference type="SMR" id="A7MFH0"/>
<dbReference type="KEGG" id="esa:ESA_02876"/>
<dbReference type="HOGENOM" id="CLU_099839_1_0_6"/>
<dbReference type="Proteomes" id="UP000000260">
    <property type="component" value="Chromosome"/>
</dbReference>
<dbReference type="GO" id="GO:0005829">
    <property type="term" value="C:cytosol"/>
    <property type="evidence" value="ECO:0007669"/>
    <property type="project" value="TreeGrafter"/>
</dbReference>
<dbReference type="GO" id="GO:0000166">
    <property type="term" value="F:nucleotide binding"/>
    <property type="evidence" value="ECO:0007669"/>
    <property type="project" value="TreeGrafter"/>
</dbReference>
<dbReference type="CDD" id="cd11740">
    <property type="entry name" value="YajQ_like"/>
    <property type="match status" value="1"/>
</dbReference>
<dbReference type="FunFam" id="3.30.70.860:FF:000001">
    <property type="entry name" value="UPF0234 protein YajQ"/>
    <property type="match status" value="1"/>
</dbReference>
<dbReference type="FunFam" id="3.30.70.990:FF:000001">
    <property type="entry name" value="UPF0234 protein YajQ"/>
    <property type="match status" value="1"/>
</dbReference>
<dbReference type="Gene3D" id="3.30.70.860">
    <property type="match status" value="1"/>
</dbReference>
<dbReference type="Gene3D" id="3.30.70.990">
    <property type="entry name" value="YajQ-like, domain 2"/>
    <property type="match status" value="1"/>
</dbReference>
<dbReference type="HAMAP" id="MF_00632">
    <property type="entry name" value="YajQ"/>
    <property type="match status" value="1"/>
</dbReference>
<dbReference type="InterPro" id="IPR007551">
    <property type="entry name" value="DUF520"/>
</dbReference>
<dbReference type="InterPro" id="IPR035571">
    <property type="entry name" value="UPF0234-like_C"/>
</dbReference>
<dbReference type="InterPro" id="IPR035570">
    <property type="entry name" value="UPF0234_N"/>
</dbReference>
<dbReference type="InterPro" id="IPR036183">
    <property type="entry name" value="YajQ-like_sf"/>
</dbReference>
<dbReference type="NCBIfam" id="NF003819">
    <property type="entry name" value="PRK05412.1"/>
    <property type="match status" value="1"/>
</dbReference>
<dbReference type="PANTHER" id="PTHR30476">
    <property type="entry name" value="UPF0234 PROTEIN YAJQ"/>
    <property type="match status" value="1"/>
</dbReference>
<dbReference type="PANTHER" id="PTHR30476:SF0">
    <property type="entry name" value="UPF0234 PROTEIN YAJQ"/>
    <property type="match status" value="1"/>
</dbReference>
<dbReference type="Pfam" id="PF04461">
    <property type="entry name" value="DUF520"/>
    <property type="match status" value="1"/>
</dbReference>
<dbReference type="SUPFAM" id="SSF89963">
    <property type="entry name" value="YajQ-like"/>
    <property type="match status" value="2"/>
</dbReference>
<proteinExistence type="inferred from homology"/>
<feature type="chain" id="PRO_1000051727" description="Nucleotide-binding protein ESA_02876">
    <location>
        <begin position="1"/>
        <end position="163"/>
    </location>
</feature>
<comment type="function">
    <text evidence="1">Nucleotide-binding protein.</text>
</comment>
<comment type="similarity">
    <text evidence="1">Belongs to the YajQ family.</text>
</comment>
<keyword id="KW-0547">Nucleotide-binding</keyword>
<keyword id="KW-1185">Reference proteome</keyword>